<dbReference type="EC" id="2.3.1.31" evidence="1"/>
<dbReference type="EMBL" id="AE008692">
    <property type="protein sequence ID" value="AAV88849.1"/>
    <property type="molecule type" value="Genomic_DNA"/>
</dbReference>
<dbReference type="SMR" id="Q5NR05"/>
<dbReference type="STRING" id="264203.ZMO0225"/>
<dbReference type="ESTHER" id="zymmo-metx">
    <property type="family name" value="Homoserine_transacetylase"/>
</dbReference>
<dbReference type="KEGG" id="zmo:ZMO0225"/>
<dbReference type="eggNOG" id="COG2021">
    <property type="taxonomic scope" value="Bacteria"/>
</dbReference>
<dbReference type="HOGENOM" id="CLU_028760_1_2_5"/>
<dbReference type="UniPathway" id="UPA00051">
    <property type="reaction ID" value="UER00074"/>
</dbReference>
<dbReference type="Proteomes" id="UP000001173">
    <property type="component" value="Chromosome"/>
</dbReference>
<dbReference type="GO" id="GO:0005737">
    <property type="term" value="C:cytoplasm"/>
    <property type="evidence" value="ECO:0007669"/>
    <property type="project" value="UniProtKB-SubCell"/>
</dbReference>
<dbReference type="GO" id="GO:0004414">
    <property type="term" value="F:homoserine O-acetyltransferase activity"/>
    <property type="evidence" value="ECO:0007669"/>
    <property type="project" value="UniProtKB-UniRule"/>
</dbReference>
<dbReference type="GO" id="GO:0009092">
    <property type="term" value="P:homoserine metabolic process"/>
    <property type="evidence" value="ECO:0007669"/>
    <property type="project" value="TreeGrafter"/>
</dbReference>
<dbReference type="GO" id="GO:0009086">
    <property type="term" value="P:methionine biosynthetic process"/>
    <property type="evidence" value="ECO:0007669"/>
    <property type="project" value="UniProtKB-UniRule"/>
</dbReference>
<dbReference type="FunFam" id="1.10.1740.110:FF:000001">
    <property type="entry name" value="Homoserine O-acetyltransferase"/>
    <property type="match status" value="1"/>
</dbReference>
<dbReference type="Gene3D" id="1.10.1740.110">
    <property type="match status" value="1"/>
</dbReference>
<dbReference type="Gene3D" id="3.40.50.1820">
    <property type="entry name" value="alpha/beta hydrolase"/>
    <property type="match status" value="1"/>
</dbReference>
<dbReference type="HAMAP" id="MF_00296">
    <property type="entry name" value="MetX_acyltransf"/>
    <property type="match status" value="1"/>
</dbReference>
<dbReference type="InterPro" id="IPR000073">
    <property type="entry name" value="AB_hydrolase_1"/>
</dbReference>
<dbReference type="InterPro" id="IPR029058">
    <property type="entry name" value="AB_hydrolase_fold"/>
</dbReference>
<dbReference type="InterPro" id="IPR008220">
    <property type="entry name" value="HAT_MetX-like"/>
</dbReference>
<dbReference type="NCBIfam" id="TIGR01392">
    <property type="entry name" value="homoserO_Ac_trn"/>
    <property type="match status" value="1"/>
</dbReference>
<dbReference type="NCBIfam" id="NF001209">
    <property type="entry name" value="PRK00175.1"/>
    <property type="match status" value="1"/>
</dbReference>
<dbReference type="PANTHER" id="PTHR32268">
    <property type="entry name" value="HOMOSERINE O-ACETYLTRANSFERASE"/>
    <property type="match status" value="1"/>
</dbReference>
<dbReference type="PANTHER" id="PTHR32268:SF11">
    <property type="entry name" value="HOMOSERINE O-ACETYLTRANSFERASE"/>
    <property type="match status" value="1"/>
</dbReference>
<dbReference type="Pfam" id="PF00561">
    <property type="entry name" value="Abhydrolase_1"/>
    <property type="match status" value="1"/>
</dbReference>
<dbReference type="PIRSF" id="PIRSF000443">
    <property type="entry name" value="Homoser_Ac_trans"/>
    <property type="match status" value="1"/>
</dbReference>
<dbReference type="SUPFAM" id="SSF53474">
    <property type="entry name" value="alpha/beta-Hydrolases"/>
    <property type="match status" value="1"/>
</dbReference>
<sequence>MNNDRRFGLKRHITLPGELALDGGSLLTGIEIAYETYGHLNADASNAILICHPLTADQFAASDHPITGKPGWWSRMIGKGKPIDPERYCIICSNVLGSCLGSTGPSSFTPGTETPYAMNFPVITIRDMVRAQAKLLDYLGIRQLKAVIGGSMGGMQALEWASTYPDRVKSVVIIASTARHSAQNIAFHEVGRQAIMADPKWRQGNYYEEKDPPVAGLAVARMAAHITYLSESGLTARFGRRLQSRQEKSFGFDADFQIESYLRHQGIRFVERFDANSYLYITRATDYFDLAEEHGGKLANAFRGTKSRFCVISFDSDWLYPTSESRVIVHALNAAGAAVSFMELSNPNGHDSFLLDAPDLHRTVHGFLEGDRA</sequence>
<organism>
    <name type="scientific">Zymomonas mobilis subsp. mobilis (strain ATCC 31821 / ZM4 / CP4)</name>
    <dbReference type="NCBI Taxonomy" id="264203"/>
    <lineage>
        <taxon>Bacteria</taxon>
        <taxon>Pseudomonadati</taxon>
        <taxon>Pseudomonadota</taxon>
        <taxon>Alphaproteobacteria</taxon>
        <taxon>Sphingomonadales</taxon>
        <taxon>Zymomonadaceae</taxon>
        <taxon>Zymomonas</taxon>
    </lineage>
</organism>
<accession>Q5NR05</accession>
<feature type="chain" id="PRO_0000155750" description="Homoserine O-acetyltransferase">
    <location>
        <begin position="1"/>
        <end position="373"/>
    </location>
</feature>
<feature type="domain" description="AB hydrolase-1" evidence="1">
    <location>
        <begin position="46"/>
        <end position="355"/>
    </location>
</feature>
<feature type="active site" description="Nucleophile" evidence="1">
    <location>
        <position position="151"/>
    </location>
</feature>
<feature type="active site" evidence="1">
    <location>
        <position position="317"/>
    </location>
</feature>
<feature type="active site" evidence="1">
    <location>
        <position position="350"/>
    </location>
</feature>
<feature type="binding site" evidence="1">
    <location>
        <position position="221"/>
    </location>
    <ligand>
        <name>substrate</name>
    </ligand>
</feature>
<feature type="binding site" evidence="1">
    <location>
        <position position="351"/>
    </location>
    <ligand>
        <name>substrate</name>
    </ligand>
</feature>
<protein>
    <recommendedName>
        <fullName evidence="1">Homoserine O-acetyltransferase</fullName>
        <shortName evidence="1">HAT</shortName>
        <ecNumber evidence="1">2.3.1.31</ecNumber>
    </recommendedName>
    <alternativeName>
        <fullName evidence="1">Homoserine transacetylase</fullName>
        <shortName evidence="1">HTA</shortName>
    </alternativeName>
</protein>
<comment type="function">
    <text evidence="1">Transfers an acetyl group from acetyl-CoA to L-homoserine, forming acetyl-L-homoserine.</text>
</comment>
<comment type="catalytic activity">
    <reaction evidence="1">
        <text>L-homoserine + acetyl-CoA = O-acetyl-L-homoserine + CoA</text>
        <dbReference type="Rhea" id="RHEA:13701"/>
        <dbReference type="ChEBI" id="CHEBI:57287"/>
        <dbReference type="ChEBI" id="CHEBI:57288"/>
        <dbReference type="ChEBI" id="CHEBI:57476"/>
        <dbReference type="ChEBI" id="CHEBI:57716"/>
        <dbReference type="EC" id="2.3.1.31"/>
    </reaction>
</comment>
<comment type="pathway">
    <text evidence="1">Amino-acid biosynthesis; L-methionine biosynthesis via de novo pathway; O-acetyl-L-homoserine from L-homoserine: step 1/1.</text>
</comment>
<comment type="subunit">
    <text evidence="1">Homodimer.</text>
</comment>
<comment type="subcellular location">
    <subcellularLocation>
        <location evidence="1">Cytoplasm</location>
    </subcellularLocation>
</comment>
<comment type="similarity">
    <text evidence="1">Belongs to the AB hydrolase superfamily. MetX family.</text>
</comment>
<evidence type="ECO:0000255" key="1">
    <source>
        <dbReference type="HAMAP-Rule" id="MF_00296"/>
    </source>
</evidence>
<reference key="1">
    <citation type="journal article" date="2005" name="Nat. Biotechnol.">
        <title>The genome sequence of the ethanologenic bacterium Zymomonas mobilis ZM4.</title>
        <authorList>
            <person name="Seo J.-S."/>
            <person name="Chong H."/>
            <person name="Park H.S."/>
            <person name="Yoon K.-O."/>
            <person name="Jung C."/>
            <person name="Kim J.J."/>
            <person name="Hong J.H."/>
            <person name="Kim H."/>
            <person name="Kim J.-H."/>
            <person name="Kil J.-I."/>
            <person name="Park C.J."/>
            <person name="Oh H.-M."/>
            <person name="Lee J.-S."/>
            <person name="Jin S.-J."/>
            <person name="Um H.-W."/>
            <person name="Lee H.-J."/>
            <person name="Oh S.-J."/>
            <person name="Kim J.Y."/>
            <person name="Kang H.L."/>
            <person name="Lee S.Y."/>
            <person name="Lee K.J."/>
            <person name="Kang H.S."/>
        </authorList>
    </citation>
    <scope>NUCLEOTIDE SEQUENCE [LARGE SCALE GENOMIC DNA]</scope>
    <source>
        <strain>ATCC 31821 / ZM4 / CP4</strain>
    </source>
</reference>
<proteinExistence type="inferred from homology"/>
<gene>
    <name evidence="1" type="primary">metXA</name>
    <name type="ordered locus">ZMO0225</name>
</gene>
<keyword id="KW-0012">Acyltransferase</keyword>
<keyword id="KW-0028">Amino-acid biosynthesis</keyword>
<keyword id="KW-0963">Cytoplasm</keyword>
<keyword id="KW-0486">Methionine biosynthesis</keyword>
<keyword id="KW-1185">Reference proteome</keyword>
<keyword id="KW-0808">Transferase</keyword>
<name>METXA_ZYMMO</name>